<reference key="1">
    <citation type="submission" date="2007-08" db="EMBL/GenBank/DDBJ databases">
        <title>Complete sequence of Shewanella sediminis HAW-EB3.</title>
        <authorList>
            <consortium name="US DOE Joint Genome Institute"/>
            <person name="Copeland A."/>
            <person name="Lucas S."/>
            <person name="Lapidus A."/>
            <person name="Barry K."/>
            <person name="Glavina del Rio T."/>
            <person name="Dalin E."/>
            <person name="Tice H."/>
            <person name="Pitluck S."/>
            <person name="Chertkov O."/>
            <person name="Brettin T."/>
            <person name="Bruce D."/>
            <person name="Detter J.C."/>
            <person name="Han C."/>
            <person name="Schmutz J."/>
            <person name="Larimer F."/>
            <person name="Land M."/>
            <person name="Hauser L."/>
            <person name="Kyrpides N."/>
            <person name="Kim E."/>
            <person name="Zhao J.-S."/>
            <person name="Richardson P."/>
        </authorList>
    </citation>
    <scope>NUCLEOTIDE SEQUENCE [LARGE SCALE GENOMIC DNA]</scope>
    <source>
        <strain>HAW-EB3</strain>
    </source>
</reference>
<gene>
    <name evidence="1" type="primary">rpsB</name>
    <name type="ordered locus">Ssed_3161</name>
</gene>
<sequence length="242" mass="26687">MTTVSMRDMLQAGVHFGHQTRYWNPKMKPFIFGARNGVHIINLEHTVPMFNEALAFISNVASKKGKVLFVGTKRAASEAIKESAISCEQFYVDHRWLGGMLTNWKTVRQSIKRLKDLESQSVDGTFDKLTKKEALMRTRELEKLEKSLGGIKNMGGLPDVIFVIGADHEHIAIKEANNLGIPVVAVVDTNSSPDGINYIVPGNDDAMRSIRLYTQSVAAAAKAGRGQDLAVQAEQDGFVEAE</sequence>
<comment type="similarity">
    <text evidence="1">Belongs to the universal ribosomal protein uS2 family.</text>
</comment>
<protein>
    <recommendedName>
        <fullName evidence="1">Small ribosomal subunit protein uS2</fullName>
    </recommendedName>
    <alternativeName>
        <fullName evidence="2">30S ribosomal protein S2</fullName>
    </alternativeName>
</protein>
<keyword id="KW-1185">Reference proteome</keyword>
<keyword id="KW-0687">Ribonucleoprotein</keyword>
<keyword id="KW-0689">Ribosomal protein</keyword>
<organism>
    <name type="scientific">Shewanella sediminis (strain HAW-EB3)</name>
    <dbReference type="NCBI Taxonomy" id="425104"/>
    <lineage>
        <taxon>Bacteria</taxon>
        <taxon>Pseudomonadati</taxon>
        <taxon>Pseudomonadota</taxon>
        <taxon>Gammaproteobacteria</taxon>
        <taxon>Alteromonadales</taxon>
        <taxon>Shewanellaceae</taxon>
        <taxon>Shewanella</taxon>
    </lineage>
</organism>
<dbReference type="EMBL" id="CP000821">
    <property type="protein sequence ID" value="ABV37765.1"/>
    <property type="molecule type" value="Genomic_DNA"/>
</dbReference>
<dbReference type="RefSeq" id="WP_012143495.1">
    <property type="nucleotide sequence ID" value="NC_009831.1"/>
</dbReference>
<dbReference type="SMR" id="A8FY42"/>
<dbReference type="STRING" id="425104.Ssed_3161"/>
<dbReference type="KEGG" id="sse:Ssed_3161"/>
<dbReference type="eggNOG" id="COG0052">
    <property type="taxonomic scope" value="Bacteria"/>
</dbReference>
<dbReference type="HOGENOM" id="CLU_040318_1_2_6"/>
<dbReference type="OrthoDB" id="9808036at2"/>
<dbReference type="Proteomes" id="UP000002015">
    <property type="component" value="Chromosome"/>
</dbReference>
<dbReference type="GO" id="GO:0022627">
    <property type="term" value="C:cytosolic small ribosomal subunit"/>
    <property type="evidence" value="ECO:0007669"/>
    <property type="project" value="TreeGrafter"/>
</dbReference>
<dbReference type="GO" id="GO:0003735">
    <property type="term" value="F:structural constituent of ribosome"/>
    <property type="evidence" value="ECO:0007669"/>
    <property type="project" value="InterPro"/>
</dbReference>
<dbReference type="GO" id="GO:0006412">
    <property type="term" value="P:translation"/>
    <property type="evidence" value="ECO:0007669"/>
    <property type="project" value="UniProtKB-UniRule"/>
</dbReference>
<dbReference type="CDD" id="cd01425">
    <property type="entry name" value="RPS2"/>
    <property type="match status" value="1"/>
</dbReference>
<dbReference type="FunFam" id="1.10.287.610:FF:000001">
    <property type="entry name" value="30S ribosomal protein S2"/>
    <property type="match status" value="1"/>
</dbReference>
<dbReference type="Gene3D" id="3.40.50.10490">
    <property type="entry name" value="Glucose-6-phosphate isomerase like protein, domain 1"/>
    <property type="match status" value="1"/>
</dbReference>
<dbReference type="Gene3D" id="1.10.287.610">
    <property type="entry name" value="Helix hairpin bin"/>
    <property type="match status" value="1"/>
</dbReference>
<dbReference type="HAMAP" id="MF_00291_B">
    <property type="entry name" value="Ribosomal_uS2_B"/>
    <property type="match status" value="1"/>
</dbReference>
<dbReference type="InterPro" id="IPR001865">
    <property type="entry name" value="Ribosomal_uS2"/>
</dbReference>
<dbReference type="InterPro" id="IPR005706">
    <property type="entry name" value="Ribosomal_uS2_bac/mit/plastid"/>
</dbReference>
<dbReference type="InterPro" id="IPR018130">
    <property type="entry name" value="Ribosomal_uS2_CS"/>
</dbReference>
<dbReference type="InterPro" id="IPR023591">
    <property type="entry name" value="Ribosomal_uS2_flav_dom_sf"/>
</dbReference>
<dbReference type="NCBIfam" id="TIGR01011">
    <property type="entry name" value="rpsB_bact"/>
    <property type="match status" value="1"/>
</dbReference>
<dbReference type="PANTHER" id="PTHR12534">
    <property type="entry name" value="30S RIBOSOMAL PROTEIN S2 PROKARYOTIC AND ORGANELLAR"/>
    <property type="match status" value="1"/>
</dbReference>
<dbReference type="PANTHER" id="PTHR12534:SF0">
    <property type="entry name" value="SMALL RIBOSOMAL SUBUNIT PROTEIN US2M"/>
    <property type="match status" value="1"/>
</dbReference>
<dbReference type="Pfam" id="PF00318">
    <property type="entry name" value="Ribosomal_S2"/>
    <property type="match status" value="1"/>
</dbReference>
<dbReference type="PRINTS" id="PR00395">
    <property type="entry name" value="RIBOSOMALS2"/>
</dbReference>
<dbReference type="SUPFAM" id="SSF52313">
    <property type="entry name" value="Ribosomal protein S2"/>
    <property type="match status" value="1"/>
</dbReference>
<dbReference type="PROSITE" id="PS00962">
    <property type="entry name" value="RIBOSOMAL_S2_1"/>
    <property type="match status" value="1"/>
</dbReference>
<dbReference type="PROSITE" id="PS00963">
    <property type="entry name" value="RIBOSOMAL_S2_2"/>
    <property type="match status" value="1"/>
</dbReference>
<accession>A8FY42</accession>
<proteinExistence type="inferred from homology"/>
<feature type="chain" id="PRO_1000078902" description="Small ribosomal subunit protein uS2">
    <location>
        <begin position="1"/>
        <end position="242"/>
    </location>
</feature>
<evidence type="ECO:0000255" key="1">
    <source>
        <dbReference type="HAMAP-Rule" id="MF_00291"/>
    </source>
</evidence>
<evidence type="ECO:0000305" key="2"/>
<name>RS2_SHESH</name>